<protein>
    <recommendedName>
        <fullName evidence="1">Glycerol-3-phosphate dehydrogenase [NAD(P)+]</fullName>
        <ecNumber evidence="1">1.1.1.94</ecNumber>
    </recommendedName>
    <alternativeName>
        <fullName evidence="1">NAD(P)(+)-dependent glycerol-3-phosphate dehydrogenase</fullName>
    </alternativeName>
    <alternativeName>
        <fullName evidence="1">NAD(P)H-dependent dihydroxyacetone-phosphate reductase</fullName>
    </alternativeName>
</protein>
<proteinExistence type="inferred from homology"/>
<feature type="chain" id="PRO_1000049567" description="Glycerol-3-phosphate dehydrogenase [NAD(P)+]">
    <location>
        <begin position="1"/>
        <end position="327"/>
    </location>
</feature>
<feature type="active site" description="Proton acceptor" evidence="1">
    <location>
        <position position="185"/>
    </location>
</feature>
<feature type="binding site" evidence="1">
    <location>
        <position position="13"/>
    </location>
    <ligand>
        <name>NADPH</name>
        <dbReference type="ChEBI" id="CHEBI:57783"/>
    </ligand>
</feature>
<feature type="binding site" evidence="1">
    <location>
        <position position="33"/>
    </location>
    <ligand>
        <name>NADPH</name>
        <dbReference type="ChEBI" id="CHEBI:57783"/>
    </ligand>
</feature>
<feature type="binding site" evidence="1">
    <location>
        <position position="102"/>
    </location>
    <ligand>
        <name>NADPH</name>
        <dbReference type="ChEBI" id="CHEBI:57783"/>
    </ligand>
</feature>
<feature type="binding site" evidence="1">
    <location>
        <position position="102"/>
    </location>
    <ligand>
        <name>sn-glycerol 3-phosphate</name>
        <dbReference type="ChEBI" id="CHEBI:57597"/>
    </ligand>
</feature>
<feature type="binding site" evidence="1">
    <location>
        <position position="130"/>
    </location>
    <ligand>
        <name>sn-glycerol 3-phosphate</name>
        <dbReference type="ChEBI" id="CHEBI:57597"/>
    </ligand>
</feature>
<feature type="binding site" evidence="1">
    <location>
        <position position="132"/>
    </location>
    <ligand>
        <name>sn-glycerol 3-phosphate</name>
        <dbReference type="ChEBI" id="CHEBI:57597"/>
    </ligand>
</feature>
<feature type="binding site" evidence="1">
    <location>
        <position position="134"/>
    </location>
    <ligand>
        <name>NADPH</name>
        <dbReference type="ChEBI" id="CHEBI:57783"/>
    </ligand>
</feature>
<feature type="binding site" evidence="1">
    <location>
        <position position="185"/>
    </location>
    <ligand>
        <name>sn-glycerol 3-phosphate</name>
        <dbReference type="ChEBI" id="CHEBI:57597"/>
    </ligand>
</feature>
<feature type="binding site" evidence="1">
    <location>
        <position position="238"/>
    </location>
    <ligand>
        <name>sn-glycerol 3-phosphate</name>
        <dbReference type="ChEBI" id="CHEBI:57597"/>
    </ligand>
</feature>
<feature type="binding site" evidence="1">
    <location>
        <position position="248"/>
    </location>
    <ligand>
        <name>sn-glycerol 3-phosphate</name>
        <dbReference type="ChEBI" id="CHEBI:57597"/>
    </ligand>
</feature>
<feature type="binding site" evidence="1">
    <location>
        <position position="249"/>
    </location>
    <ligand>
        <name>NADPH</name>
        <dbReference type="ChEBI" id="CHEBI:57783"/>
    </ligand>
</feature>
<feature type="binding site" evidence="1">
    <location>
        <position position="249"/>
    </location>
    <ligand>
        <name>sn-glycerol 3-phosphate</name>
        <dbReference type="ChEBI" id="CHEBI:57597"/>
    </ligand>
</feature>
<feature type="binding site" evidence="1">
    <location>
        <position position="250"/>
    </location>
    <ligand>
        <name>sn-glycerol 3-phosphate</name>
        <dbReference type="ChEBI" id="CHEBI:57597"/>
    </ligand>
</feature>
<feature type="binding site" evidence="1">
    <location>
        <position position="275"/>
    </location>
    <ligand>
        <name>NADPH</name>
        <dbReference type="ChEBI" id="CHEBI:57783"/>
    </ligand>
</feature>
<name>GPDA_VESOH</name>
<accession>A5CVT6</accession>
<gene>
    <name evidence="1" type="primary">gpsA</name>
    <name type="ordered locus">COSY_0840</name>
</gene>
<organism>
    <name type="scientific">Vesicomyosocius okutanii subsp. Calyptogena okutanii (strain HA)</name>
    <dbReference type="NCBI Taxonomy" id="412965"/>
    <lineage>
        <taxon>Bacteria</taxon>
        <taxon>Pseudomonadati</taxon>
        <taxon>Pseudomonadota</taxon>
        <taxon>Gammaproteobacteria</taxon>
        <taxon>Candidatus Pseudothioglobaceae</taxon>
        <taxon>Candidatus Vesicomyosocius</taxon>
    </lineage>
</organism>
<reference key="1">
    <citation type="journal article" date="2007" name="Curr. Biol.">
        <title>Reduced genome of the thioautotrophic intracellular symbiont in a deep-sea clam, Calyptogena okutanii.</title>
        <authorList>
            <person name="Kuwahara H."/>
            <person name="Yoshida T."/>
            <person name="Takaki Y."/>
            <person name="Shimamura S."/>
            <person name="Nishi S."/>
            <person name="Harada M."/>
            <person name="Matsuyama K."/>
            <person name="Takishita K."/>
            <person name="Kawato M."/>
            <person name="Uematsu K."/>
            <person name="Fujiwara Y."/>
            <person name="Sato T."/>
            <person name="Kato C."/>
            <person name="Kitagawa M."/>
            <person name="Kato I."/>
            <person name="Maruyama T."/>
        </authorList>
    </citation>
    <scope>NUCLEOTIDE SEQUENCE [LARGE SCALE GENOMIC DNA]</scope>
    <source>
        <strain>HA</strain>
    </source>
</reference>
<sequence length="327" mass="35924">MSNNLSIIGAGAWGSALSIALYDNFDTIYLHTHTQADIKKLKSKHSALSIPYPYNVKIAYDLYKLQDSKNIIITTPSYAFSEILEKIKPFINHTHKIAWGTKGFDTTKRCFLYESFKRLFPNRNGCVISGPSFAFEVALNKPTALVVASIDENTRNHFAKLIQTNTLRTYTNADIIGVEVGGSVKNILAIAAGIASGLKYGFNTQAALIARGLSEMSRLGKSLGAKNSTFIGLSGLGDLVLTCSDNLSRNRRFGQELVNNHNIKNALINVGGTVEGLNTLDLILSIANKKQVEMPICEQVYQITQGKITPAEAVNYLMSREQQQNNE</sequence>
<comment type="function">
    <text evidence="1">Catalyzes the reduction of the glycolytic intermediate dihydroxyacetone phosphate (DHAP) to sn-glycerol 3-phosphate (G3P), the key precursor for phospholipid synthesis.</text>
</comment>
<comment type="catalytic activity">
    <reaction evidence="1">
        <text>sn-glycerol 3-phosphate + NAD(+) = dihydroxyacetone phosphate + NADH + H(+)</text>
        <dbReference type="Rhea" id="RHEA:11092"/>
        <dbReference type="ChEBI" id="CHEBI:15378"/>
        <dbReference type="ChEBI" id="CHEBI:57540"/>
        <dbReference type="ChEBI" id="CHEBI:57597"/>
        <dbReference type="ChEBI" id="CHEBI:57642"/>
        <dbReference type="ChEBI" id="CHEBI:57945"/>
        <dbReference type="EC" id="1.1.1.94"/>
    </reaction>
    <physiologicalReaction direction="right-to-left" evidence="1">
        <dbReference type="Rhea" id="RHEA:11094"/>
    </physiologicalReaction>
</comment>
<comment type="catalytic activity">
    <reaction evidence="1">
        <text>sn-glycerol 3-phosphate + NADP(+) = dihydroxyacetone phosphate + NADPH + H(+)</text>
        <dbReference type="Rhea" id="RHEA:11096"/>
        <dbReference type="ChEBI" id="CHEBI:15378"/>
        <dbReference type="ChEBI" id="CHEBI:57597"/>
        <dbReference type="ChEBI" id="CHEBI:57642"/>
        <dbReference type="ChEBI" id="CHEBI:57783"/>
        <dbReference type="ChEBI" id="CHEBI:58349"/>
        <dbReference type="EC" id="1.1.1.94"/>
    </reaction>
    <physiologicalReaction direction="right-to-left" evidence="1">
        <dbReference type="Rhea" id="RHEA:11098"/>
    </physiologicalReaction>
</comment>
<comment type="pathway">
    <text evidence="1">Membrane lipid metabolism; glycerophospholipid metabolism.</text>
</comment>
<comment type="subcellular location">
    <subcellularLocation>
        <location evidence="1">Cytoplasm</location>
    </subcellularLocation>
</comment>
<comment type="similarity">
    <text evidence="1">Belongs to the NAD-dependent glycerol-3-phosphate dehydrogenase family.</text>
</comment>
<dbReference type="EC" id="1.1.1.94" evidence="1"/>
<dbReference type="EMBL" id="AP009247">
    <property type="protein sequence ID" value="BAF61945.1"/>
    <property type="molecule type" value="Genomic_DNA"/>
</dbReference>
<dbReference type="RefSeq" id="WP_011930214.1">
    <property type="nucleotide sequence ID" value="NC_009465.1"/>
</dbReference>
<dbReference type="SMR" id="A5CVT6"/>
<dbReference type="STRING" id="412965.COSY_0840"/>
<dbReference type="KEGG" id="vok:COSY_0840"/>
<dbReference type="eggNOG" id="COG0240">
    <property type="taxonomic scope" value="Bacteria"/>
</dbReference>
<dbReference type="HOGENOM" id="CLU_033449_0_2_6"/>
<dbReference type="OrthoDB" id="9812273at2"/>
<dbReference type="UniPathway" id="UPA00940"/>
<dbReference type="Proteomes" id="UP000000247">
    <property type="component" value="Chromosome"/>
</dbReference>
<dbReference type="GO" id="GO:0005829">
    <property type="term" value="C:cytosol"/>
    <property type="evidence" value="ECO:0007669"/>
    <property type="project" value="TreeGrafter"/>
</dbReference>
<dbReference type="GO" id="GO:0047952">
    <property type="term" value="F:glycerol-3-phosphate dehydrogenase [NAD(P)+] activity"/>
    <property type="evidence" value="ECO:0007669"/>
    <property type="project" value="UniProtKB-UniRule"/>
</dbReference>
<dbReference type="GO" id="GO:0051287">
    <property type="term" value="F:NAD binding"/>
    <property type="evidence" value="ECO:0007669"/>
    <property type="project" value="InterPro"/>
</dbReference>
<dbReference type="GO" id="GO:0005975">
    <property type="term" value="P:carbohydrate metabolic process"/>
    <property type="evidence" value="ECO:0007669"/>
    <property type="project" value="InterPro"/>
</dbReference>
<dbReference type="GO" id="GO:0046167">
    <property type="term" value="P:glycerol-3-phosphate biosynthetic process"/>
    <property type="evidence" value="ECO:0007669"/>
    <property type="project" value="UniProtKB-UniRule"/>
</dbReference>
<dbReference type="GO" id="GO:0046168">
    <property type="term" value="P:glycerol-3-phosphate catabolic process"/>
    <property type="evidence" value="ECO:0007669"/>
    <property type="project" value="InterPro"/>
</dbReference>
<dbReference type="GO" id="GO:0006650">
    <property type="term" value="P:glycerophospholipid metabolic process"/>
    <property type="evidence" value="ECO:0007669"/>
    <property type="project" value="UniProtKB-UniRule"/>
</dbReference>
<dbReference type="GO" id="GO:0008654">
    <property type="term" value="P:phospholipid biosynthetic process"/>
    <property type="evidence" value="ECO:0007669"/>
    <property type="project" value="UniProtKB-KW"/>
</dbReference>
<dbReference type="FunFam" id="1.10.1040.10:FF:000001">
    <property type="entry name" value="Glycerol-3-phosphate dehydrogenase [NAD(P)+]"/>
    <property type="match status" value="1"/>
</dbReference>
<dbReference type="Gene3D" id="1.10.1040.10">
    <property type="entry name" value="N-(1-d-carboxylethyl)-l-norvaline Dehydrogenase, domain 2"/>
    <property type="match status" value="1"/>
</dbReference>
<dbReference type="Gene3D" id="3.40.50.720">
    <property type="entry name" value="NAD(P)-binding Rossmann-like Domain"/>
    <property type="match status" value="1"/>
</dbReference>
<dbReference type="HAMAP" id="MF_00394">
    <property type="entry name" value="NAD_Glyc3P_dehydrog"/>
    <property type="match status" value="1"/>
</dbReference>
<dbReference type="InterPro" id="IPR008927">
    <property type="entry name" value="6-PGluconate_DH-like_C_sf"/>
</dbReference>
<dbReference type="InterPro" id="IPR013328">
    <property type="entry name" value="6PGD_dom2"/>
</dbReference>
<dbReference type="InterPro" id="IPR006168">
    <property type="entry name" value="G3P_DH_NAD-dep"/>
</dbReference>
<dbReference type="InterPro" id="IPR006109">
    <property type="entry name" value="G3P_DH_NAD-dep_C"/>
</dbReference>
<dbReference type="InterPro" id="IPR011128">
    <property type="entry name" value="G3P_DH_NAD-dep_N"/>
</dbReference>
<dbReference type="InterPro" id="IPR036291">
    <property type="entry name" value="NAD(P)-bd_dom_sf"/>
</dbReference>
<dbReference type="NCBIfam" id="NF000940">
    <property type="entry name" value="PRK00094.1-2"/>
    <property type="match status" value="1"/>
</dbReference>
<dbReference type="NCBIfam" id="NF000942">
    <property type="entry name" value="PRK00094.1-4"/>
    <property type="match status" value="1"/>
</dbReference>
<dbReference type="PANTHER" id="PTHR11728">
    <property type="entry name" value="GLYCEROL-3-PHOSPHATE DEHYDROGENASE"/>
    <property type="match status" value="1"/>
</dbReference>
<dbReference type="PANTHER" id="PTHR11728:SF1">
    <property type="entry name" value="GLYCEROL-3-PHOSPHATE DEHYDROGENASE [NAD(+)] 2, CHLOROPLASTIC"/>
    <property type="match status" value="1"/>
</dbReference>
<dbReference type="Pfam" id="PF07479">
    <property type="entry name" value="NAD_Gly3P_dh_C"/>
    <property type="match status" value="1"/>
</dbReference>
<dbReference type="Pfam" id="PF01210">
    <property type="entry name" value="NAD_Gly3P_dh_N"/>
    <property type="match status" value="1"/>
</dbReference>
<dbReference type="PIRSF" id="PIRSF000114">
    <property type="entry name" value="Glycerol-3-P_dh"/>
    <property type="match status" value="1"/>
</dbReference>
<dbReference type="PRINTS" id="PR00077">
    <property type="entry name" value="GPDHDRGNASE"/>
</dbReference>
<dbReference type="SUPFAM" id="SSF48179">
    <property type="entry name" value="6-phosphogluconate dehydrogenase C-terminal domain-like"/>
    <property type="match status" value="1"/>
</dbReference>
<dbReference type="SUPFAM" id="SSF51735">
    <property type="entry name" value="NAD(P)-binding Rossmann-fold domains"/>
    <property type="match status" value="1"/>
</dbReference>
<dbReference type="PROSITE" id="PS00957">
    <property type="entry name" value="NAD_G3PDH"/>
    <property type="match status" value="1"/>
</dbReference>
<evidence type="ECO:0000255" key="1">
    <source>
        <dbReference type="HAMAP-Rule" id="MF_00394"/>
    </source>
</evidence>
<keyword id="KW-0963">Cytoplasm</keyword>
<keyword id="KW-0444">Lipid biosynthesis</keyword>
<keyword id="KW-0443">Lipid metabolism</keyword>
<keyword id="KW-0520">NAD</keyword>
<keyword id="KW-0521">NADP</keyword>
<keyword id="KW-0547">Nucleotide-binding</keyword>
<keyword id="KW-0560">Oxidoreductase</keyword>
<keyword id="KW-0594">Phospholipid biosynthesis</keyword>
<keyword id="KW-1208">Phospholipid metabolism</keyword>
<keyword id="KW-1185">Reference proteome</keyword>